<keyword id="KW-0002">3D-structure</keyword>
<keyword id="KW-0963">Cytoplasm</keyword>
<keyword id="KW-0269">Exonuclease</keyword>
<keyword id="KW-0378">Hydrolase</keyword>
<keyword id="KW-0479">Metal-binding</keyword>
<keyword id="KW-0540">Nuclease</keyword>
<keyword id="KW-0547">Nucleotide-binding</keyword>
<keyword id="KW-1185">Reference proteome</keyword>
<keyword id="KW-0694">RNA-binding</keyword>
<sequence length="403" mass="46312">MTTVSCDKDENKVDQLGESLSQLRISTRKNNKPSQKKGSLVLSCKKFPHVSVNYVVDKTPKLLTDCKEVHNCSYIINDATLLWNEASRKPRLRPEVCTYIKDSKWENKAVKDSFIGIDLTKGYDDYVPLDRNVLNSLVILKEAYQRYEKTLNPEKTTFVSLRHHIIDIIMCPFLDEPLSLLMTVQPDKNILISVDKSKDKPNGIHETRNSFNKKICYTGFALEDLLIESPTEGHILEHELYYSIVHGSLNDEIDLLIQAEMDSINTLTDTYTEIKSSVHFKLGNTYHRRKLLRMWIQTNLLPKSDLLIGFRNSYSNELEQLKAYKIQDIYHKINNSSIVGKPGKFYKFNPNVANDWFQHIFQVLKQNLLLLSQESTSTTFKVQIDTNLTLSISPASQFVTALG</sequence>
<organism>
    <name type="scientific">Kluyveromyces lactis (strain ATCC 8585 / CBS 2359 / DSM 70799 / NBRC 1267 / NRRL Y-1140 / WM37)</name>
    <name type="common">Yeast</name>
    <name type="synonym">Candida sphaerica</name>
    <dbReference type="NCBI Taxonomy" id="284590"/>
    <lineage>
        <taxon>Eukaryota</taxon>
        <taxon>Fungi</taxon>
        <taxon>Dikarya</taxon>
        <taxon>Ascomycota</taxon>
        <taxon>Saccharomycotina</taxon>
        <taxon>Saccharomycetes</taxon>
        <taxon>Saccharomycetales</taxon>
        <taxon>Saccharomycetaceae</taxon>
        <taxon>Kluyveromyces</taxon>
    </lineage>
</organism>
<reference key="1">
    <citation type="journal article" date="2004" name="Nature">
        <title>Genome evolution in yeasts.</title>
        <authorList>
            <person name="Dujon B."/>
            <person name="Sherman D."/>
            <person name="Fischer G."/>
            <person name="Durrens P."/>
            <person name="Casaregola S."/>
            <person name="Lafontaine I."/>
            <person name="de Montigny J."/>
            <person name="Marck C."/>
            <person name="Neuveglise C."/>
            <person name="Talla E."/>
            <person name="Goffard N."/>
            <person name="Frangeul L."/>
            <person name="Aigle M."/>
            <person name="Anthouard V."/>
            <person name="Babour A."/>
            <person name="Barbe V."/>
            <person name="Barnay S."/>
            <person name="Blanchin S."/>
            <person name="Beckerich J.-M."/>
            <person name="Beyne E."/>
            <person name="Bleykasten C."/>
            <person name="Boisrame A."/>
            <person name="Boyer J."/>
            <person name="Cattolico L."/>
            <person name="Confanioleri F."/>
            <person name="de Daruvar A."/>
            <person name="Despons L."/>
            <person name="Fabre E."/>
            <person name="Fairhead C."/>
            <person name="Ferry-Dumazet H."/>
            <person name="Groppi A."/>
            <person name="Hantraye F."/>
            <person name="Hennequin C."/>
            <person name="Jauniaux N."/>
            <person name="Joyet P."/>
            <person name="Kachouri R."/>
            <person name="Kerrest A."/>
            <person name="Koszul R."/>
            <person name="Lemaire M."/>
            <person name="Lesur I."/>
            <person name="Ma L."/>
            <person name="Muller H."/>
            <person name="Nicaud J.-M."/>
            <person name="Nikolski M."/>
            <person name="Oztas S."/>
            <person name="Ozier-Kalogeropoulos O."/>
            <person name="Pellenz S."/>
            <person name="Potier S."/>
            <person name="Richard G.-F."/>
            <person name="Straub M.-L."/>
            <person name="Suleau A."/>
            <person name="Swennen D."/>
            <person name="Tekaia F."/>
            <person name="Wesolowski-Louvel M."/>
            <person name="Westhof E."/>
            <person name="Wirth B."/>
            <person name="Zeniou-Meyer M."/>
            <person name="Zivanovic Y."/>
            <person name="Bolotin-Fukuhara M."/>
            <person name="Thierry A."/>
            <person name="Bouchier C."/>
            <person name="Caudron B."/>
            <person name="Scarpelli C."/>
            <person name="Gaillardin C."/>
            <person name="Weissenbach J."/>
            <person name="Wincker P."/>
            <person name="Souciet J.-L."/>
        </authorList>
    </citation>
    <scope>NUCLEOTIDE SEQUENCE [LARGE SCALE GENOMIC DNA]</scope>
    <source>
        <strain>ATCC 8585 / CBS 2359 / DSM 70799 / NBRC 1267 / NRRL Y-1140 / WM37</strain>
    </source>
</reference>
<reference key="2">
    <citation type="journal article" date="2012" name="Nat. Struct. Mol. Biol.">
        <title>Dxo1 is a new type of eukaryotic enzyme with both decapping and 5'-3' exoribonuclease activity.</title>
        <authorList>
            <person name="Chang J.H."/>
            <person name="Jiao X."/>
            <person name="Chiba K."/>
            <person name="Oh C."/>
            <person name="Martin C.E."/>
            <person name="Kiledjian M."/>
            <person name="Tong L."/>
        </authorList>
    </citation>
    <scope>X-RAY CRYSTALLOGRAPHY (2.40 ANGSTROMS) IN COMPLEX WITH MANGANESE</scope>
    <scope>FUNCTION</scope>
    <scope>CATALYTIC ACTIVITY</scope>
    <scope>MUTAGENESIS OF LEU-161; HIS-163 AND ASP-167</scope>
</reference>
<reference key="3">
    <citation type="journal article" date="2017" name="Cell">
        <title>5' end nicotinamide adenine dinucleotide cap in human cells promotes RNA decay through DXO-mediated deNADding.</title>
        <authorList>
            <person name="Jiao X."/>
            <person name="Doamekpor S.K."/>
            <person name="Bird J.G."/>
            <person name="Nickels B.E."/>
            <person name="Tong L."/>
            <person name="Hart R.P."/>
            <person name="Kiledjian M."/>
        </authorList>
    </citation>
    <scope>FUNCTION</scope>
</reference>
<proteinExistence type="evidence at protein level"/>
<name>DXO1_KLULA</name>
<protein>
    <recommendedName>
        <fullName evidence="6">Decapping and exoribonuclease protein 1</fullName>
        <shortName evidence="6">KlDxo1</shortName>
        <ecNumber evidence="4">3.6.1.-</ecNumber>
    </recommendedName>
    <alternativeName>
        <fullName evidence="7">5'-3' exoribonuclease Dxo1</fullName>
        <ecNumber evidence="4">3.1.13.-</ecNumber>
    </alternativeName>
    <alternativeName>
        <fullName evidence="7">NAD-capped RNA hydrolase Dxo1</fullName>
        <shortName evidence="7">DeNADding enzyme Dxo1</shortName>
        <ecNumber evidence="5">3.6.1.-</ecNumber>
    </alternativeName>
</protein>
<comment type="function">
    <text evidence="2 4 5">Decapping enzyme for NAD-capped RNAs: specifically hydrolyzes the nicotinamide adenine dinucleotide (NAD) cap from a subset of RNAs by removing the entire NAD moiety from the 5'-end of an NAD-capped RNA (PubMed:28283058). The NAD-cap is present at the 5'-end of some RNAs and snoRNAs (By similarity). In contrast to the canonical 5'-end N7 methylguanosine (m7G) cap, the NAD cap promotes mRNA decay (By similarity). Also acts as a non-canonical decapping enzyme that removes the entire cap structure of m7G capped or incompletely capped RNAs and mediates their subsequent degradation (PubMed:22961381). Has decapping and 5'-3' exonuclease activities (PubMed:22961381). Has decapping activity toward incomplete 5'-end cap mRNAs such as unmethylated 5'-end-capped RNA to release GpppN and 5'-end monophosphate RNA (PubMed:22961381). The 5'-end monophosphate RNA is then degraded by the 5'-3' exoribonuclease activity, enabling this enzyme to decap and degrade incompletely capped mRNAs (PubMed:22961381).</text>
</comment>
<comment type="catalytic activity">
    <reaction evidence="1">
        <text>a 5'-end NAD(+)-phospho-ribonucleoside in mRNA + H2O = a 5'-end phospho-ribonucleoside in mRNA + NAD(+) + H(+)</text>
        <dbReference type="Rhea" id="RHEA:60880"/>
        <dbReference type="Rhea" id="RHEA-COMP:15692"/>
        <dbReference type="Rhea" id="RHEA-COMP:15698"/>
        <dbReference type="ChEBI" id="CHEBI:15377"/>
        <dbReference type="ChEBI" id="CHEBI:15378"/>
        <dbReference type="ChEBI" id="CHEBI:57540"/>
        <dbReference type="ChEBI" id="CHEBI:138282"/>
        <dbReference type="ChEBI" id="CHEBI:144029"/>
    </reaction>
    <physiologicalReaction direction="left-to-right" evidence="1">
        <dbReference type="Rhea" id="RHEA:60881"/>
    </physiologicalReaction>
</comment>
<comment type="catalytic activity">
    <reaction evidence="4">
        <text>a 5'-end (N(7)-methyl 5'-triphosphoguanosine)-ribonucleoside-ribonucleotide in mRNA + H2O = a (N(7)-methyl 5'-triphosphoguanosine)-nucleoside + a 5'-end phospho-ribonucleoside in mRNA + H(+)</text>
        <dbReference type="Rhea" id="RHEA:66928"/>
        <dbReference type="Rhea" id="RHEA-COMP:15692"/>
        <dbReference type="Rhea" id="RHEA-COMP:17313"/>
        <dbReference type="ChEBI" id="CHEBI:15377"/>
        <dbReference type="ChEBI" id="CHEBI:15378"/>
        <dbReference type="ChEBI" id="CHEBI:138282"/>
        <dbReference type="ChEBI" id="CHEBI:172876"/>
        <dbReference type="ChEBI" id="CHEBI:172877"/>
    </reaction>
    <physiologicalReaction direction="left-to-right" evidence="4">
        <dbReference type="Rhea" id="RHEA:66929"/>
    </physiologicalReaction>
</comment>
<comment type="cofactor">
    <cofactor evidence="4">
        <name>a divalent metal cation</name>
        <dbReference type="ChEBI" id="CHEBI:60240"/>
    </cofactor>
    <text evidence="4">Divalent metal cation.</text>
</comment>
<comment type="subcellular location">
    <subcellularLocation>
        <location evidence="3">Cytoplasm</location>
    </subcellularLocation>
</comment>
<comment type="similarity">
    <text evidence="7">Belongs to the DXO/Dom3Z family.</text>
</comment>
<dbReference type="EC" id="3.6.1.-" evidence="4 5"/>
<dbReference type="EC" id="3.1.13.-" evidence="4"/>
<dbReference type="EMBL" id="CR382125">
    <property type="protein sequence ID" value="CAG99136.1"/>
    <property type="molecule type" value="Genomic_DNA"/>
</dbReference>
<dbReference type="RefSeq" id="XP_454049.1">
    <property type="nucleotide sequence ID" value="XM_454049.1"/>
</dbReference>
<dbReference type="PDB" id="4GPS">
    <property type="method" value="X-ray"/>
    <property type="resolution" value="2.40 A"/>
    <property type="chains" value="A=1-403"/>
</dbReference>
<dbReference type="PDB" id="4GPU">
    <property type="method" value="X-ray"/>
    <property type="resolution" value="2.80 A"/>
    <property type="chains" value="A=1-403"/>
</dbReference>
<dbReference type="PDBsum" id="4GPS"/>
<dbReference type="PDBsum" id="4GPU"/>
<dbReference type="SMR" id="Q6CPU0"/>
<dbReference type="FunCoup" id="Q6CPU0">
    <property type="interactions" value="40"/>
</dbReference>
<dbReference type="STRING" id="284590.Q6CPU0"/>
<dbReference type="PaxDb" id="284590-Q6CPU0"/>
<dbReference type="KEGG" id="kla:KLLA0_E02245g"/>
<dbReference type="eggNOG" id="ENOG502RWNP">
    <property type="taxonomic scope" value="Eukaryota"/>
</dbReference>
<dbReference type="HOGENOM" id="CLU_696510_0_0_1"/>
<dbReference type="InParanoid" id="Q6CPU0"/>
<dbReference type="OMA" id="CIRSICK"/>
<dbReference type="EvolutionaryTrace" id="Q6CPU0"/>
<dbReference type="Proteomes" id="UP000000598">
    <property type="component" value="Chromosome E"/>
</dbReference>
<dbReference type="GO" id="GO:0005829">
    <property type="term" value="C:cytosol"/>
    <property type="evidence" value="ECO:0007669"/>
    <property type="project" value="TreeGrafter"/>
</dbReference>
<dbReference type="GO" id="GO:0005634">
    <property type="term" value="C:nucleus"/>
    <property type="evidence" value="ECO:0007669"/>
    <property type="project" value="TreeGrafter"/>
</dbReference>
<dbReference type="GO" id="GO:0008409">
    <property type="term" value="F:5'-3' exonuclease activity"/>
    <property type="evidence" value="ECO:0000314"/>
    <property type="project" value="UniProtKB"/>
</dbReference>
<dbReference type="GO" id="GO:0046872">
    <property type="term" value="F:metal ion binding"/>
    <property type="evidence" value="ECO:0007669"/>
    <property type="project" value="UniProtKB-KW"/>
</dbReference>
<dbReference type="GO" id="GO:0034353">
    <property type="term" value="F:mRNA 5'-diphosphatase activity"/>
    <property type="evidence" value="ECO:0007669"/>
    <property type="project" value="TreeGrafter"/>
</dbReference>
<dbReference type="GO" id="GO:0000166">
    <property type="term" value="F:nucleotide binding"/>
    <property type="evidence" value="ECO:0007669"/>
    <property type="project" value="UniProtKB-KW"/>
</dbReference>
<dbReference type="GO" id="GO:0003723">
    <property type="term" value="F:RNA binding"/>
    <property type="evidence" value="ECO:0007669"/>
    <property type="project" value="UniProtKB-KW"/>
</dbReference>
<dbReference type="GO" id="GO:0110152">
    <property type="term" value="F:RNA NAD+-cap (NAD+-forming) hydrolase activity"/>
    <property type="evidence" value="ECO:0007669"/>
    <property type="project" value="RHEA"/>
</dbReference>
<dbReference type="GO" id="GO:0110155">
    <property type="term" value="P:NAD-cap decapping"/>
    <property type="evidence" value="ECO:0000314"/>
    <property type="project" value="UniProtKB"/>
</dbReference>
<dbReference type="GO" id="GO:0071028">
    <property type="term" value="P:nuclear mRNA surveillance"/>
    <property type="evidence" value="ECO:0000315"/>
    <property type="project" value="UniProtKB"/>
</dbReference>
<dbReference type="GO" id="GO:0090304">
    <property type="term" value="P:nucleic acid metabolic process"/>
    <property type="evidence" value="ECO:0000314"/>
    <property type="project" value="UniProtKB"/>
</dbReference>
<dbReference type="InterPro" id="IPR013961">
    <property type="entry name" value="RAI1"/>
</dbReference>
<dbReference type="InterPro" id="IPR039039">
    <property type="entry name" value="RAI1-like_fam"/>
</dbReference>
<dbReference type="PANTHER" id="PTHR12395:SF25">
    <property type="entry name" value="DECAPPING AND EXORIBONUCLEASE PROTEIN 1"/>
    <property type="match status" value="1"/>
</dbReference>
<dbReference type="PANTHER" id="PTHR12395">
    <property type="entry name" value="DOM-3 RELATED"/>
    <property type="match status" value="1"/>
</dbReference>
<dbReference type="Pfam" id="PF08652">
    <property type="entry name" value="RAI1"/>
    <property type="match status" value="1"/>
</dbReference>
<accession>Q6CPU0</accession>
<feature type="chain" id="PRO_0000422597" description="Decapping and exoribonuclease protein 1">
    <location>
        <begin position="1"/>
        <end position="403"/>
    </location>
</feature>
<feature type="binding site" evidence="4">
    <location>
        <position position="223"/>
    </location>
    <ligand>
        <name>a divalent metal cation</name>
        <dbReference type="ChEBI" id="CHEBI:60240"/>
    </ligand>
</feature>
<feature type="binding site" evidence="2">
    <location>
        <position position="260"/>
    </location>
    <ligand>
        <name>substrate</name>
    </ligand>
</feature>
<feature type="binding site" evidence="4">
    <location>
        <position position="262"/>
    </location>
    <ligand>
        <name>a divalent metal cation</name>
        <dbReference type="ChEBI" id="CHEBI:60240"/>
    </ligand>
</feature>
<feature type="binding site" evidence="4">
    <location>
        <position position="273"/>
    </location>
    <ligand>
        <name>a divalent metal cation</name>
        <dbReference type="ChEBI" id="CHEBI:60240"/>
    </ligand>
</feature>
<feature type="binding site" evidence="4">
    <location>
        <position position="274"/>
    </location>
    <ligand>
        <name>a divalent metal cation</name>
        <dbReference type="ChEBI" id="CHEBI:60240"/>
    </ligand>
</feature>
<feature type="binding site" evidence="2">
    <location>
        <position position="275"/>
    </location>
    <ligand>
        <name>substrate</name>
    </ligand>
</feature>
<feature type="binding site" evidence="2">
    <location>
        <position position="297"/>
    </location>
    <ligand>
        <name>substrate</name>
    </ligand>
</feature>
<feature type="mutagenesis site" description="Reduced decapping activity without affecting the exonuclease activity. Reduced decapping and exonuclease activities; when associated with G-163." evidence="4">
    <original>L</original>
    <variation>W</variation>
    <location>
        <position position="161"/>
    </location>
</feature>
<feature type="mutagenesis site" description="Does not affect the exonuclease activity. Reduced decapping and exonuclease activities; when associated with W-161. Reduced decapping and exonuclease activities; when associated with K-167." evidence="4">
    <original>H</original>
    <variation>G</variation>
    <location>
        <position position="163"/>
    </location>
</feature>
<feature type="mutagenesis site" description="Does not affect the decapping and exonuclease activities. Reduced decapping and exonuclease activities; when associated with G-163." evidence="4">
    <original>D</original>
    <variation>K</variation>
    <location>
        <position position="167"/>
    </location>
</feature>
<feature type="strand" evidence="8">
    <location>
        <begin position="40"/>
        <end position="43"/>
    </location>
</feature>
<feature type="strand" evidence="8">
    <location>
        <begin position="62"/>
        <end position="75"/>
    </location>
</feature>
<feature type="turn" evidence="8">
    <location>
        <begin position="76"/>
        <end position="79"/>
    </location>
</feature>
<feature type="strand" evidence="8">
    <location>
        <begin position="80"/>
        <end position="83"/>
    </location>
</feature>
<feature type="helix" evidence="8">
    <location>
        <begin position="84"/>
        <end position="86"/>
    </location>
</feature>
<feature type="helix" evidence="8">
    <location>
        <begin position="94"/>
        <end position="102"/>
    </location>
</feature>
<feature type="helix" evidence="8">
    <location>
        <begin position="108"/>
        <end position="111"/>
    </location>
</feature>
<feature type="turn" evidence="8">
    <location>
        <begin position="112"/>
        <end position="116"/>
    </location>
</feature>
<feature type="turn" evidence="8">
    <location>
        <begin position="119"/>
        <end position="122"/>
    </location>
</feature>
<feature type="helix" evidence="8">
    <location>
        <begin position="136"/>
        <end position="147"/>
    </location>
</feature>
<feature type="helix" evidence="8">
    <location>
        <begin position="148"/>
        <end position="150"/>
    </location>
</feature>
<feature type="strand" evidence="8">
    <location>
        <begin position="155"/>
        <end position="161"/>
    </location>
</feature>
<feature type="helix" evidence="8">
    <location>
        <begin position="162"/>
        <end position="170"/>
    </location>
</feature>
<feature type="helix" evidence="8">
    <location>
        <begin position="171"/>
        <end position="173"/>
    </location>
</feature>
<feature type="strand" evidence="8">
    <location>
        <begin position="178"/>
        <end position="184"/>
    </location>
</feature>
<feature type="strand" evidence="8">
    <location>
        <begin position="190"/>
        <end position="193"/>
    </location>
</feature>
<feature type="helix" evidence="8">
    <location>
        <begin position="213"/>
        <end position="226"/>
    </location>
</feature>
<feature type="strand" evidence="8">
    <location>
        <begin position="239"/>
        <end position="248"/>
    </location>
</feature>
<feature type="strand" evidence="8">
    <location>
        <begin position="250"/>
        <end position="260"/>
    </location>
</feature>
<feature type="strand" evidence="8">
    <location>
        <begin position="263"/>
        <end position="265"/>
    </location>
</feature>
<feature type="turn" evidence="8">
    <location>
        <begin position="266"/>
        <end position="269"/>
    </location>
</feature>
<feature type="strand" evidence="8">
    <location>
        <begin position="270"/>
        <end position="277"/>
    </location>
</feature>
<feature type="helix" evidence="8">
    <location>
        <begin position="285"/>
        <end position="299"/>
    </location>
</feature>
<feature type="strand" evidence="8">
    <location>
        <begin position="301"/>
        <end position="303"/>
    </location>
</feature>
<feature type="strand" evidence="8">
    <location>
        <begin position="305"/>
        <end position="311"/>
    </location>
</feature>
<feature type="turn" evidence="8">
    <location>
        <begin position="313"/>
        <end position="315"/>
    </location>
</feature>
<feature type="strand" evidence="8">
    <location>
        <begin position="317"/>
        <end position="324"/>
    </location>
</feature>
<feature type="helix" evidence="8">
    <location>
        <begin position="326"/>
        <end position="333"/>
    </location>
</feature>
<feature type="helix" evidence="8">
    <location>
        <begin position="338"/>
        <end position="340"/>
    </location>
</feature>
<feature type="helix" evidence="8">
    <location>
        <begin position="346"/>
        <end position="348"/>
    </location>
</feature>
<feature type="helix" evidence="8">
    <location>
        <begin position="350"/>
        <end position="373"/>
    </location>
</feature>
<feature type="strand" evidence="8">
    <location>
        <begin position="378"/>
        <end position="384"/>
    </location>
</feature>
<feature type="strand" evidence="8">
    <location>
        <begin position="389"/>
        <end position="394"/>
    </location>
</feature>
<evidence type="ECO:0000250" key="1">
    <source>
        <dbReference type="UniProtKB" id="O13836"/>
    </source>
</evidence>
<evidence type="ECO:0000250" key="2">
    <source>
        <dbReference type="UniProtKB" id="O70348"/>
    </source>
</evidence>
<evidence type="ECO:0000250" key="3">
    <source>
        <dbReference type="UniProtKB" id="Q06349"/>
    </source>
</evidence>
<evidence type="ECO:0000269" key="4">
    <source>
    </source>
</evidence>
<evidence type="ECO:0000269" key="5">
    <source>
    </source>
</evidence>
<evidence type="ECO:0000303" key="6">
    <source>
    </source>
</evidence>
<evidence type="ECO:0000305" key="7"/>
<evidence type="ECO:0007829" key="8">
    <source>
        <dbReference type="PDB" id="4GPS"/>
    </source>
</evidence>
<gene>
    <name evidence="6" type="primary">DXO1</name>
    <name type="ordered locus">KLLA0E02245g</name>
</gene>